<evidence type="ECO:0000255" key="1">
    <source>
        <dbReference type="HAMAP-Rule" id="MF_01345"/>
    </source>
</evidence>
<evidence type="ECO:0000305" key="2"/>
<accession>A8ESV2</accession>
<organism>
    <name type="scientific">Aliarcobacter butzleri (strain RM4018)</name>
    <name type="common">Arcobacter butzleri</name>
    <dbReference type="NCBI Taxonomy" id="367737"/>
    <lineage>
        <taxon>Bacteria</taxon>
        <taxon>Pseudomonadati</taxon>
        <taxon>Campylobacterota</taxon>
        <taxon>Epsilonproteobacteria</taxon>
        <taxon>Campylobacterales</taxon>
        <taxon>Arcobacteraceae</taxon>
        <taxon>Aliarcobacter</taxon>
    </lineage>
</organism>
<dbReference type="EMBL" id="CP000361">
    <property type="protein sequence ID" value="ABV67026.1"/>
    <property type="molecule type" value="Genomic_DNA"/>
</dbReference>
<dbReference type="RefSeq" id="WP_012012513.1">
    <property type="nucleotide sequence ID" value="NC_009850.1"/>
</dbReference>
<dbReference type="SMR" id="A8ESV2"/>
<dbReference type="STRING" id="367737.Abu_0761"/>
<dbReference type="GeneID" id="24304148"/>
<dbReference type="KEGG" id="abu:Abu_0761"/>
<dbReference type="eggNOG" id="COG0186">
    <property type="taxonomic scope" value="Bacteria"/>
</dbReference>
<dbReference type="HOGENOM" id="CLU_073626_1_1_7"/>
<dbReference type="Proteomes" id="UP000001136">
    <property type="component" value="Chromosome"/>
</dbReference>
<dbReference type="GO" id="GO:0022627">
    <property type="term" value="C:cytosolic small ribosomal subunit"/>
    <property type="evidence" value="ECO:0007669"/>
    <property type="project" value="TreeGrafter"/>
</dbReference>
<dbReference type="GO" id="GO:0019843">
    <property type="term" value="F:rRNA binding"/>
    <property type="evidence" value="ECO:0007669"/>
    <property type="project" value="UniProtKB-UniRule"/>
</dbReference>
<dbReference type="GO" id="GO:0003735">
    <property type="term" value="F:structural constituent of ribosome"/>
    <property type="evidence" value="ECO:0007669"/>
    <property type="project" value="InterPro"/>
</dbReference>
<dbReference type="GO" id="GO:0006412">
    <property type="term" value="P:translation"/>
    <property type="evidence" value="ECO:0007669"/>
    <property type="project" value="UniProtKB-UniRule"/>
</dbReference>
<dbReference type="CDD" id="cd00364">
    <property type="entry name" value="Ribosomal_uS17"/>
    <property type="match status" value="1"/>
</dbReference>
<dbReference type="Gene3D" id="2.40.50.140">
    <property type="entry name" value="Nucleic acid-binding proteins"/>
    <property type="match status" value="1"/>
</dbReference>
<dbReference type="HAMAP" id="MF_01345_B">
    <property type="entry name" value="Ribosomal_uS17_B"/>
    <property type="match status" value="1"/>
</dbReference>
<dbReference type="InterPro" id="IPR012340">
    <property type="entry name" value="NA-bd_OB-fold"/>
</dbReference>
<dbReference type="InterPro" id="IPR000266">
    <property type="entry name" value="Ribosomal_uS17"/>
</dbReference>
<dbReference type="InterPro" id="IPR019984">
    <property type="entry name" value="Ribosomal_uS17_bact/chlr"/>
</dbReference>
<dbReference type="InterPro" id="IPR019979">
    <property type="entry name" value="Ribosomal_uS17_CS"/>
</dbReference>
<dbReference type="NCBIfam" id="NF004123">
    <property type="entry name" value="PRK05610.1"/>
    <property type="match status" value="1"/>
</dbReference>
<dbReference type="NCBIfam" id="TIGR03635">
    <property type="entry name" value="uS17_bact"/>
    <property type="match status" value="1"/>
</dbReference>
<dbReference type="PANTHER" id="PTHR10744">
    <property type="entry name" value="40S RIBOSOMAL PROTEIN S11 FAMILY MEMBER"/>
    <property type="match status" value="1"/>
</dbReference>
<dbReference type="PANTHER" id="PTHR10744:SF1">
    <property type="entry name" value="SMALL RIBOSOMAL SUBUNIT PROTEIN US17M"/>
    <property type="match status" value="1"/>
</dbReference>
<dbReference type="Pfam" id="PF00366">
    <property type="entry name" value="Ribosomal_S17"/>
    <property type="match status" value="1"/>
</dbReference>
<dbReference type="PRINTS" id="PR00973">
    <property type="entry name" value="RIBOSOMALS17"/>
</dbReference>
<dbReference type="SUPFAM" id="SSF50249">
    <property type="entry name" value="Nucleic acid-binding proteins"/>
    <property type="match status" value="1"/>
</dbReference>
<dbReference type="PROSITE" id="PS00056">
    <property type="entry name" value="RIBOSOMAL_S17"/>
    <property type="match status" value="1"/>
</dbReference>
<feature type="chain" id="PRO_1000067698" description="Small ribosomal subunit protein uS17">
    <location>
        <begin position="1"/>
        <end position="83"/>
    </location>
</feature>
<proteinExistence type="inferred from homology"/>
<comment type="function">
    <text evidence="1">One of the primary rRNA binding proteins, it binds specifically to the 5'-end of 16S ribosomal RNA.</text>
</comment>
<comment type="subunit">
    <text evidence="1">Part of the 30S ribosomal subunit.</text>
</comment>
<comment type="similarity">
    <text evidence="1">Belongs to the universal ribosomal protein uS17 family.</text>
</comment>
<gene>
    <name evidence="1" type="primary">rpsQ</name>
    <name type="ordered locus">Abu_0761</name>
</gene>
<keyword id="KW-1185">Reference proteome</keyword>
<keyword id="KW-0687">Ribonucleoprotein</keyword>
<keyword id="KW-0689">Ribosomal protein</keyword>
<keyword id="KW-0694">RNA-binding</keyword>
<keyword id="KW-0699">rRNA-binding</keyword>
<sequence>MTHKREIQGVVVKKSGDKTASVLVTRSVLHPKYHKTVKRFKKYLIHDEKNELNVGDSVIAIECRPLSKTKSFRLKTIVATGVK</sequence>
<protein>
    <recommendedName>
        <fullName evidence="1">Small ribosomal subunit protein uS17</fullName>
    </recommendedName>
    <alternativeName>
        <fullName evidence="2">30S ribosomal protein S17</fullName>
    </alternativeName>
</protein>
<name>RS17_ALIB4</name>
<reference key="1">
    <citation type="journal article" date="2007" name="PLoS ONE">
        <title>The complete genome sequence and analysis of the Epsilonproteobacterium Arcobacter butzleri.</title>
        <authorList>
            <person name="Miller W.G."/>
            <person name="Parker C.T."/>
            <person name="Rubenfield M."/>
            <person name="Mendz G.L."/>
            <person name="Woesten M.M.S.M."/>
            <person name="Ussery D.W."/>
            <person name="Stolz J.F."/>
            <person name="Binnewies T.T."/>
            <person name="Hallin P.F."/>
            <person name="Wang G."/>
            <person name="Malek J.A."/>
            <person name="Rogosin A."/>
            <person name="Stanker L.H."/>
            <person name="Mandrell R.E."/>
        </authorList>
    </citation>
    <scope>NUCLEOTIDE SEQUENCE [LARGE SCALE GENOMIC DNA]</scope>
    <source>
        <strain>RM4018</strain>
    </source>
</reference>